<evidence type="ECO:0000255" key="1">
    <source>
        <dbReference type="HAMAP-Rule" id="MF_01684"/>
    </source>
</evidence>
<proteinExistence type="inferred from homology"/>
<keyword id="KW-0028">Amino-acid biosynthesis</keyword>
<keyword id="KW-0378">Hydrolase</keyword>
<keyword id="KW-0486">Methionine biosynthesis</keyword>
<organism>
    <name type="scientific">Bacillus cereus (strain AH820)</name>
    <dbReference type="NCBI Taxonomy" id="405535"/>
    <lineage>
        <taxon>Bacteria</taxon>
        <taxon>Bacillati</taxon>
        <taxon>Bacillota</taxon>
        <taxon>Bacilli</taxon>
        <taxon>Bacillales</taxon>
        <taxon>Bacillaceae</taxon>
        <taxon>Bacillus</taxon>
        <taxon>Bacillus cereus group</taxon>
    </lineage>
</organism>
<protein>
    <recommendedName>
        <fullName evidence="1">5'-methylthioadenosine/S-adenosylhomocysteine nucleosidase</fullName>
        <shortName evidence="1">MTA/SAH nucleosidase</shortName>
        <shortName evidence="1">MTAN</shortName>
        <ecNumber evidence="1">3.2.2.9</ecNumber>
    </recommendedName>
    <alternativeName>
        <fullName evidence="1">5'-deoxyadenosine nucleosidase</fullName>
        <shortName evidence="1">DOA nucleosidase</shortName>
        <shortName evidence="1">dAdo nucleosidase</shortName>
    </alternativeName>
    <alternativeName>
        <fullName evidence="1">5'-methylthioadenosine nucleosidase</fullName>
        <shortName evidence="1">MTA nucleosidase</shortName>
    </alternativeName>
    <alternativeName>
        <fullName evidence="1">S-adenosylhomocysteine nucleosidase</fullName>
        <shortName evidence="1">AdoHcy nucleosidase</shortName>
        <shortName evidence="1">SAH nucleosidase</shortName>
        <shortName evidence="1">SRH nucleosidase</shortName>
    </alternativeName>
</protein>
<reference key="1">
    <citation type="submission" date="2008-10" db="EMBL/GenBank/DDBJ databases">
        <title>Genome sequence of Bacillus cereus AH820.</title>
        <authorList>
            <person name="Dodson R.J."/>
            <person name="Durkin A.S."/>
            <person name="Rosovitz M.J."/>
            <person name="Rasko D.A."/>
            <person name="Hoffmaster A."/>
            <person name="Ravel J."/>
            <person name="Sutton G."/>
        </authorList>
    </citation>
    <scope>NUCLEOTIDE SEQUENCE [LARGE SCALE GENOMIC DNA]</scope>
    <source>
        <strain>AH820</strain>
    </source>
</reference>
<gene>
    <name evidence="1" type="primary">mtnN</name>
    <name type="ordered locus">BCAH820_4454</name>
</gene>
<comment type="function">
    <text evidence="1">Catalyzes the irreversible cleavage of the glycosidic bond in both 5'-methylthioadenosine (MTA) and S-adenosylhomocysteine (SAH/AdoHcy) to adenine and the corresponding thioribose, 5'-methylthioribose and S-ribosylhomocysteine, respectively. Also cleaves 5'-deoxyadenosine, a toxic by-product of radical S-adenosylmethionine (SAM) enzymes, into 5-deoxyribose and adenine.</text>
</comment>
<comment type="catalytic activity">
    <reaction evidence="1">
        <text>S-adenosyl-L-homocysteine + H2O = S-(5-deoxy-D-ribos-5-yl)-L-homocysteine + adenine</text>
        <dbReference type="Rhea" id="RHEA:17805"/>
        <dbReference type="ChEBI" id="CHEBI:15377"/>
        <dbReference type="ChEBI" id="CHEBI:16708"/>
        <dbReference type="ChEBI" id="CHEBI:57856"/>
        <dbReference type="ChEBI" id="CHEBI:58195"/>
        <dbReference type="EC" id="3.2.2.9"/>
    </reaction>
</comment>
<comment type="catalytic activity">
    <reaction evidence="1">
        <text>S-methyl-5'-thioadenosine + H2O = 5-(methylsulfanyl)-D-ribose + adenine</text>
        <dbReference type="Rhea" id="RHEA:13617"/>
        <dbReference type="ChEBI" id="CHEBI:15377"/>
        <dbReference type="ChEBI" id="CHEBI:16708"/>
        <dbReference type="ChEBI" id="CHEBI:17509"/>
        <dbReference type="ChEBI" id="CHEBI:78440"/>
        <dbReference type="EC" id="3.2.2.9"/>
    </reaction>
</comment>
<comment type="catalytic activity">
    <reaction evidence="1">
        <text>5'-deoxyadenosine + H2O = 5-deoxy-D-ribose + adenine</text>
        <dbReference type="Rhea" id="RHEA:29859"/>
        <dbReference type="ChEBI" id="CHEBI:15377"/>
        <dbReference type="ChEBI" id="CHEBI:16708"/>
        <dbReference type="ChEBI" id="CHEBI:17319"/>
        <dbReference type="ChEBI" id="CHEBI:149540"/>
        <dbReference type="EC" id="3.2.2.9"/>
    </reaction>
    <physiologicalReaction direction="left-to-right" evidence="1">
        <dbReference type="Rhea" id="RHEA:29860"/>
    </physiologicalReaction>
</comment>
<comment type="pathway">
    <text evidence="1">Amino-acid biosynthesis; L-methionine biosynthesis via salvage pathway; S-methyl-5-thio-alpha-D-ribose 1-phosphate from S-methyl-5'-thioadenosine (hydrolase route): step 1/2.</text>
</comment>
<comment type="similarity">
    <text evidence="1">Belongs to the PNP/UDP phosphorylase family. MtnN subfamily.</text>
</comment>
<feature type="chain" id="PRO_1000187409" description="5'-methylthioadenosine/S-adenosylhomocysteine nucleosidase">
    <location>
        <begin position="1"/>
        <end position="231"/>
    </location>
</feature>
<feature type="active site" description="Proton acceptor" evidence="1">
    <location>
        <position position="12"/>
    </location>
</feature>
<feature type="active site" description="Proton donor" evidence="1">
    <location>
        <position position="198"/>
    </location>
</feature>
<feature type="binding site" evidence="1">
    <location>
        <position position="78"/>
    </location>
    <ligand>
        <name>substrate</name>
    </ligand>
</feature>
<feature type="binding site" evidence="1">
    <location>
        <position position="153"/>
    </location>
    <ligand>
        <name>substrate</name>
    </ligand>
</feature>
<feature type="binding site" evidence="1">
    <location>
        <begin position="174"/>
        <end position="175"/>
    </location>
    <ligand>
        <name>substrate</name>
    </ligand>
</feature>
<name>MTNN_BACC0</name>
<dbReference type="EC" id="3.2.2.9" evidence="1"/>
<dbReference type="EMBL" id="CP001283">
    <property type="protein sequence ID" value="ACK88111.1"/>
    <property type="molecule type" value="Genomic_DNA"/>
</dbReference>
<dbReference type="RefSeq" id="WP_001217039.1">
    <property type="nucleotide sequence ID" value="NC_011773.1"/>
</dbReference>
<dbReference type="SMR" id="B7JP64"/>
<dbReference type="GeneID" id="75087509"/>
<dbReference type="KEGG" id="bcu:BCAH820_4454"/>
<dbReference type="HOGENOM" id="CLU_031248_2_2_9"/>
<dbReference type="UniPathway" id="UPA00904">
    <property type="reaction ID" value="UER00871"/>
</dbReference>
<dbReference type="Proteomes" id="UP000001363">
    <property type="component" value="Chromosome"/>
</dbReference>
<dbReference type="GO" id="GO:0005829">
    <property type="term" value="C:cytosol"/>
    <property type="evidence" value="ECO:0007669"/>
    <property type="project" value="TreeGrafter"/>
</dbReference>
<dbReference type="GO" id="GO:0008782">
    <property type="term" value="F:adenosylhomocysteine nucleosidase activity"/>
    <property type="evidence" value="ECO:0007669"/>
    <property type="project" value="UniProtKB-UniRule"/>
</dbReference>
<dbReference type="GO" id="GO:0008930">
    <property type="term" value="F:methylthioadenosine nucleosidase activity"/>
    <property type="evidence" value="ECO:0007669"/>
    <property type="project" value="UniProtKB-UniRule"/>
</dbReference>
<dbReference type="GO" id="GO:0019509">
    <property type="term" value="P:L-methionine salvage from methylthioadenosine"/>
    <property type="evidence" value="ECO:0007669"/>
    <property type="project" value="UniProtKB-UniRule"/>
</dbReference>
<dbReference type="GO" id="GO:0019284">
    <property type="term" value="P:L-methionine salvage from S-adenosylmethionine"/>
    <property type="evidence" value="ECO:0007669"/>
    <property type="project" value="TreeGrafter"/>
</dbReference>
<dbReference type="GO" id="GO:0009164">
    <property type="term" value="P:nucleoside catabolic process"/>
    <property type="evidence" value="ECO:0007669"/>
    <property type="project" value="InterPro"/>
</dbReference>
<dbReference type="CDD" id="cd09008">
    <property type="entry name" value="MTAN"/>
    <property type="match status" value="1"/>
</dbReference>
<dbReference type="FunFam" id="3.40.50.1580:FF:000001">
    <property type="entry name" value="MTA/SAH nucleosidase family protein"/>
    <property type="match status" value="1"/>
</dbReference>
<dbReference type="Gene3D" id="3.40.50.1580">
    <property type="entry name" value="Nucleoside phosphorylase domain"/>
    <property type="match status" value="1"/>
</dbReference>
<dbReference type="HAMAP" id="MF_01684">
    <property type="entry name" value="Salvage_MtnN"/>
    <property type="match status" value="1"/>
</dbReference>
<dbReference type="InterPro" id="IPR010049">
    <property type="entry name" value="MTA_SAH_Nsdase"/>
</dbReference>
<dbReference type="InterPro" id="IPR000845">
    <property type="entry name" value="Nucleoside_phosphorylase_d"/>
</dbReference>
<dbReference type="InterPro" id="IPR035994">
    <property type="entry name" value="Nucleoside_phosphorylase_sf"/>
</dbReference>
<dbReference type="NCBIfam" id="TIGR01704">
    <property type="entry name" value="MTA_SAH-Nsdase"/>
    <property type="match status" value="1"/>
</dbReference>
<dbReference type="NCBIfam" id="NF004079">
    <property type="entry name" value="PRK05584.1"/>
    <property type="match status" value="1"/>
</dbReference>
<dbReference type="PANTHER" id="PTHR46832">
    <property type="entry name" value="5'-METHYLTHIOADENOSINE/S-ADENOSYLHOMOCYSTEINE NUCLEOSIDASE"/>
    <property type="match status" value="1"/>
</dbReference>
<dbReference type="PANTHER" id="PTHR46832:SF1">
    <property type="entry name" value="5'-METHYLTHIOADENOSINE_S-ADENOSYLHOMOCYSTEINE NUCLEOSIDASE"/>
    <property type="match status" value="1"/>
</dbReference>
<dbReference type="Pfam" id="PF01048">
    <property type="entry name" value="PNP_UDP_1"/>
    <property type="match status" value="1"/>
</dbReference>
<dbReference type="SUPFAM" id="SSF53167">
    <property type="entry name" value="Purine and uridine phosphorylases"/>
    <property type="match status" value="1"/>
</dbReference>
<sequence>MRIAVIGAMEEEVRILRDKLEQAETETVAGCEFTKGQLAGHEVILLKSGIGKVNAAMSTTILLERYKPEKVINTGSAGGFHHSLNVGDVVISTEVRHHDVDVTAFNYEYGQVPGMPPGFKADEALVALAEKCMQAEENIQVVKGMIATGDSFMSDPNRVAAIRDKFENLYAVEMEAAAVAQVCHQYEVPFVIIRALSDIAGKESNVSFDQFLDQAALHSTNFIVKVLEELK</sequence>
<accession>B7JP64</accession>